<proteinExistence type="predicted"/>
<reference key="1">
    <citation type="journal article" date="2003" name="Virology">
        <title>AFV1, a novel virus infecting hyperthermophilic archaea of the genus acidianus.</title>
        <authorList>
            <person name="Bettstetter M."/>
            <person name="Peng X."/>
            <person name="Garrett R.A."/>
            <person name="Prangishvili D."/>
        </authorList>
    </citation>
    <scope>NUCLEOTIDE SEQUENCE [GENOMIC DNA]</scope>
</reference>
<feature type="chain" id="PRO_0000384560" description="Uncharacterized protein ORF146">
    <location>
        <begin position="1"/>
        <end position="146"/>
    </location>
</feature>
<dbReference type="EMBL" id="AJ567472">
    <property type="protein sequence ID" value="CAD98956.1"/>
    <property type="molecule type" value="Genomic_DNA"/>
</dbReference>
<dbReference type="RefSeq" id="YP_003752.1">
    <property type="nucleotide sequence ID" value="NC_005830.1"/>
</dbReference>
<dbReference type="KEGG" id="vg:2769182"/>
<dbReference type="Proteomes" id="UP000000514">
    <property type="component" value="Genome"/>
</dbReference>
<gene>
    <name type="ORF">ORF146</name>
</gene>
<name>Y146_AFV1Y</name>
<organism>
    <name type="scientific">Acidianus filamentous virus 1 (isolate United States/Yellowstone)</name>
    <name type="common">AFV-1</name>
    <dbReference type="NCBI Taxonomy" id="654909"/>
    <lineage>
        <taxon>Viruses</taxon>
        <taxon>Adnaviria</taxon>
        <taxon>Zilligvirae</taxon>
        <taxon>Taleaviricota</taxon>
        <taxon>Tokiviricetes</taxon>
        <taxon>Ligamenvirales</taxon>
        <taxon>Ungulaviridae</taxon>
        <taxon>Captovirus</taxon>
        <taxon>Acidianus filamentous virus 1</taxon>
    </lineage>
</organism>
<accession>Q70LC4</accession>
<protein>
    <recommendedName>
        <fullName>Uncharacterized protein ORF146</fullName>
    </recommendedName>
</protein>
<keyword id="KW-1185">Reference proteome</keyword>
<organismHost>
    <name type="scientific">Acidianus hospitalis</name>
    <dbReference type="NCBI Taxonomy" id="563177"/>
</organismHost>
<organismHost>
    <name type="scientific">Acidianus infernus</name>
    <dbReference type="NCBI Taxonomy" id="12915"/>
</organismHost>
<sequence>MLEEFRLYRNERTQRLMLTKTEFAEVKYKTVELPVGDSVRTGQEVFLNGAWYKVETVRGKKAKLRPLENGNWKLIATGIEAVKQYLNVLTETEVAVEENRLIVKMKRPPMVAVDKGTSYTFNEAFMLLYNYCMENKIDLILEFINS</sequence>